<organism>
    <name type="scientific">Oryza sativa subsp. japonica</name>
    <name type="common">Rice</name>
    <dbReference type="NCBI Taxonomy" id="39947"/>
    <lineage>
        <taxon>Eukaryota</taxon>
        <taxon>Viridiplantae</taxon>
        <taxon>Streptophyta</taxon>
        <taxon>Embryophyta</taxon>
        <taxon>Tracheophyta</taxon>
        <taxon>Spermatophyta</taxon>
        <taxon>Magnoliopsida</taxon>
        <taxon>Liliopsida</taxon>
        <taxon>Poales</taxon>
        <taxon>Poaceae</taxon>
        <taxon>BOP clade</taxon>
        <taxon>Oryzoideae</taxon>
        <taxon>Oryzeae</taxon>
        <taxon>Oryzinae</taxon>
        <taxon>Oryza</taxon>
        <taxon>Oryza sativa</taxon>
    </lineage>
</organism>
<keyword id="KW-0186">Copper</keyword>
<keyword id="KW-0187">Copper transport</keyword>
<keyword id="KW-0406">Ion transport</keyword>
<keyword id="KW-0472">Membrane</keyword>
<keyword id="KW-1185">Reference proteome</keyword>
<keyword id="KW-0812">Transmembrane</keyword>
<keyword id="KW-1133">Transmembrane helix</keyword>
<keyword id="KW-0813">Transport</keyword>
<name>COPT4_ORYSJ</name>
<reference key="1">
    <citation type="journal article" date="2005" name="Genome Res.">
        <title>Sequence, annotation, and analysis of synteny between rice chromosome 3 and diverged grass species.</title>
        <authorList>
            <consortium name="The rice chromosome 3 sequencing consortium"/>
            <person name="Buell C.R."/>
            <person name="Yuan Q."/>
            <person name="Ouyang S."/>
            <person name="Liu J."/>
            <person name="Zhu W."/>
            <person name="Wang A."/>
            <person name="Maiti R."/>
            <person name="Haas B."/>
            <person name="Wortman J."/>
            <person name="Pertea M."/>
            <person name="Jones K.M."/>
            <person name="Kim M."/>
            <person name="Overton L."/>
            <person name="Tsitrin T."/>
            <person name="Fadrosh D."/>
            <person name="Bera J."/>
            <person name="Weaver B."/>
            <person name="Jin S."/>
            <person name="Johri S."/>
            <person name="Reardon M."/>
            <person name="Webb K."/>
            <person name="Hill J."/>
            <person name="Moffat K."/>
            <person name="Tallon L."/>
            <person name="Van Aken S."/>
            <person name="Lewis M."/>
            <person name="Utterback T."/>
            <person name="Feldblyum T."/>
            <person name="Zismann V."/>
            <person name="Iobst S."/>
            <person name="Hsiao J."/>
            <person name="de Vazeille A.R."/>
            <person name="Salzberg S.L."/>
            <person name="White O."/>
            <person name="Fraser C.M."/>
            <person name="Yu Y."/>
            <person name="Kim H."/>
            <person name="Rambo T."/>
            <person name="Currie J."/>
            <person name="Collura K."/>
            <person name="Kernodle-Thompson S."/>
            <person name="Wei F."/>
            <person name="Kudrna K."/>
            <person name="Ammiraju J.S.S."/>
            <person name="Luo M."/>
            <person name="Goicoechea J.L."/>
            <person name="Wing R.A."/>
            <person name="Henry D."/>
            <person name="Oates R."/>
            <person name="Palmer M."/>
            <person name="Pries G."/>
            <person name="Saski C."/>
            <person name="Simmons J."/>
            <person name="Soderlund C."/>
            <person name="Nelson W."/>
            <person name="de la Bastide M."/>
            <person name="Spiegel L."/>
            <person name="Nascimento L."/>
            <person name="Huang E."/>
            <person name="Preston R."/>
            <person name="Zutavern T."/>
            <person name="Palmer L."/>
            <person name="O'Shaughnessy A."/>
            <person name="Dike S."/>
            <person name="McCombie W.R."/>
            <person name="Minx P."/>
            <person name="Cordum H."/>
            <person name="Wilson R."/>
            <person name="Jin W."/>
            <person name="Lee H.R."/>
            <person name="Jiang J."/>
            <person name="Jackson S."/>
        </authorList>
    </citation>
    <scope>NUCLEOTIDE SEQUENCE [LARGE SCALE GENOMIC DNA]</scope>
    <source>
        <strain>cv. Nipponbare</strain>
    </source>
</reference>
<reference key="2">
    <citation type="journal article" date="2005" name="Nature">
        <title>The map-based sequence of the rice genome.</title>
        <authorList>
            <consortium name="International rice genome sequencing project (IRGSP)"/>
        </authorList>
    </citation>
    <scope>NUCLEOTIDE SEQUENCE [LARGE SCALE GENOMIC DNA]</scope>
    <source>
        <strain>cv. Nipponbare</strain>
    </source>
</reference>
<reference key="3">
    <citation type="journal article" date="2008" name="Nucleic Acids Res.">
        <title>The rice annotation project database (RAP-DB): 2008 update.</title>
        <authorList>
            <consortium name="The rice annotation project (RAP)"/>
        </authorList>
    </citation>
    <scope>GENOME REANNOTATION</scope>
    <source>
        <strain>cv. Nipponbare</strain>
    </source>
</reference>
<reference key="4">
    <citation type="journal article" date="2013" name="Rice">
        <title>Improvement of the Oryza sativa Nipponbare reference genome using next generation sequence and optical map data.</title>
        <authorList>
            <person name="Kawahara Y."/>
            <person name="de la Bastide M."/>
            <person name="Hamilton J.P."/>
            <person name="Kanamori H."/>
            <person name="McCombie W.R."/>
            <person name="Ouyang S."/>
            <person name="Schwartz D.C."/>
            <person name="Tanaka T."/>
            <person name="Wu J."/>
            <person name="Zhou S."/>
            <person name="Childs K.L."/>
            <person name="Davidson R.M."/>
            <person name="Lin H."/>
            <person name="Quesada-Ocampo L."/>
            <person name="Vaillancourt B."/>
            <person name="Sakai H."/>
            <person name="Lee S.S."/>
            <person name="Kim J."/>
            <person name="Numa H."/>
            <person name="Itoh T."/>
            <person name="Buell C.R."/>
            <person name="Matsumoto T."/>
        </authorList>
    </citation>
    <scope>GENOME REANNOTATION</scope>
    <source>
        <strain>cv. Nipponbare</strain>
    </source>
</reference>
<reference key="5">
    <citation type="journal article" date="2005" name="PLoS Biol.">
        <title>The genomes of Oryza sativa: a history of duplications.</title>
        <authorList>
            <person name="Yu J."/>
            <person name="Wang J."/>
            <person name="Lin W."/>
            <person name="Li S."/>
            <person name="Li H."/>
            <person name="Zhou J."/>
            <person name="Ni P."/>
            <person name="Dong W."/>
            <person name="Hu S."/>
            <person name="Zeng C."/>
            <person name="Zhang J."/>
            <person name="Zhang Y."/>
            <person name="Li R."/>
            <person name="Xu Z."/>
            <person name="Li S."/>
            <person name="Li X."/>
            <person name="Zheng H."/>
            <person name="Cong L."/>
            <person name="Lin L."/>
            <person name="Yin J."/>
            <person name="Geng J."/>
            <person name="Li G."/>
            <person name="Shi J."/>
            <person name="Liu J."/>
            <person name="Lv H."/>
            <person name="Li J."/>
            <person name="Wang J."/>
            <person name="Deng Y."/>
            <person name="Ran L."/>
            <person name="Shi X."/>
            <person name="Wang X."/>
            <person name="Wu Q."/>
            <person name="Li C."/>
            <person name="Ren X."/>
            <person name="Wang J."/>
            <person name="Wang X."/>
            <person name="Li D."/>
            <person name="Liu D."/>
            <person name="Zhang X."/>
            <person name="Ji Z."/>
            <person name="Zhao W."/>
            <person name="Sun Y."/>
            <person name="Zhang Z."/>
            <person name="Bao J."/>
            <person name="Han Y."/>
            <person name="Dong L."/>
            <person name="Ji J."/>
            <person name="Chen P."/>
            <person name="Wu S."/>
            <person name="Liu J."/>
            <person name="Xiao Y."/>
            <person name="Bu D."/>
            <person name="Tan J."/>
            <person name="Yang L."/>
            <person name="Ye C."/>
            <person name="Zhang J."/>
            <person name="Xu J."/>
            <person name="Zhou Y."/>
            <person name="Yu Y."/>
            <person name="Zhang B."/>
            <person name="Zhuang S."/>
            <person name="Wei H."/>
            <person name="Liu B."/>
            <person name="Lei M."/>
            <person name="Yu H."/>
            <person name="Li Y."/>
            <person name="Xu H."/>
            <person name="Wei S."/>
            <person name="He X."/>
            <person name="Fang L."/>
            <person name="Zhang Z."/>
            <person name="Zhang Y."/>
            <person name="Huang X."/>
            <person name="Su Z."/>
            <person name="Tong W."/>
            <person name="Li J."/>
            <person name="Tong Z."/>
            <person name="Li S."/>
            <person name="Ye J."/>
            <person name="Wang L."/>
            <person name="Fang L."/>
            <person name="Lei T."/>
            <person name="Chen C.-S."/>
            <person name="Chen H.-C."/>
            <person name="Xu Z."/>
            <person name="Li H."/>
            <person name="Huang H."/>
            <person name="Zhang F."/>
            <person name="Xu H."/>
            <person name="Li N."/>
            <person name="Zhao C."/>
            <person name="Li S."/>
            <person name="Dong L."/>
            <person name="Huang Y."/>
            <person name="Li L."/>
            <person name="Xi Y."/>
            <person name="Qi Q."/>
            <person name="Li W."/>
            <person name="Zhang B."/>
            <person name="Hu W."/>
            <person name="Zhang Y."/>
            <person name="Tian X."/>
            <person name="Jiao Y."/>
            <person name="Liang X."/>
            <person name="Jin J."/>
            <person name="Gao L."/>
            <person name="Zheng W."/>
            <person name="Hao B."/>
            <person name="Liu S.-M."/>
            <person name="Wang W."/>
            <person name="Yuan L."/>
            <person name="Cao M."/>
            <person name="McDermott J."/>
            <person name="Samudrala R."/>
            <person name="Wang J."/>
            <person name="Wong G.K.-S."/>
            <person name="Yang H."/>
        </authorList>
    </citation>
    <scope>NUCLEOTIDE SEQUENCE [LARGE SCALE GENOMIC DNA]</scope>
    <source>
        <strain>cv. Nipponbare</strain>
    </source>
</reference>
<protein>
    <recommendedName>
        <fullName>Copper transporter 4</fullName>
        <shortName>OsCOPT4</shortName>
    </recommendedName>
</protein>
<proteinExistence type="inferred from homology"/>
<sequence>MAMPMPMPPPGPGGDAPPAPTMMPGMAMPMTTGMSFTWGHRAVVLFPRWPGDRAGVGMYFLCLLLVLALAALAEALSAASRRLDLDLDLSRSRGRRRRRRQQLLAAGVHAARMGLAYLVMLAVMSFNAGVLLAAVAGHAAGFLLARSGLLGSRAAAPEIDGAAAAAAATSNGSSLHPSSEPKP</sequence>
<dbReference type="EMBL" id="DP000009">
    <property type="protein sequence ID" value="ABF96177.1"/>
    <property type="molecule type" value="Genomic_DNA"/>
</dbReference>
<dbReference type="EMBL" id="AP008209">
    <property type="protein sequence ID" value="BAH92166.1"/>
    <property type="molecule type" value="Genomic_DNA"/>
</dbReference>
<dbReference type="EMBL" id="AP014959">
    <property type="protein sequence ID" value="BAS84364.1"/>
    <property type="molecule type" value="Genomic_DNA"/>
</dbReference>
<dbReference type="EMBL" id="CM000140">
    <property type="protein sequence ID" value="EAZ27073.1"/>
    <property type="molecule type" value="Genomic_DNA"/>
</dbReference>
<dbReference type="RefSeq" id="XP_015630711.1">
    <property type="nucleotide sequence ID" value="XM_015775225.1"/>
</dbReference>
<dbReference type="FunCoup" id="Q10KT6">
    <property type="interactions" value="13"/>
</dbReference>
<dbReference type="STRING" id="39947.Q10KT6"/>
<dbReference type="PaxDb" id="39947-Q10KT6"/>
<dbReference type="EnsemblPlants" id="Os03t0370800-00">
    <property type="protein sequence ID" value="Os03t0370800-00"/>
    <property type="gene ID" value="Os03g0370800"/>
</dbReference>
<dbReference type="Gramene" id="Os03t0370800-00">
    <property type="protein sequence ID" value="Os03t0370800-00"/>
    <property type="gene ID" value="Os03g0370800"/>
</dbReference>
<dbReference type="KEGG" id="dosa:Os03g0370800"/>
<dbReference type="eggNOG" id="KOG3386">
    <property type="taxonomic scope" value="Eukaryota"/>
</dbReference>
<dbReference type="HOGENOM" id="CLU_079690_1_0_1"/>
<dbReference type="InParanoid" id="Q10KT6"/>
<dbReference type="OMA" id="DDHTHGM"/>
<dbReference type="Proteomes" id="UP000000763">
    <property type="component" value="Chromosome 3"/>
</dbReference>
<dbReference type="Proteomes" id="UP000007752">
    <property type="component" value="Chromosome 3"/>
</dbReference>
<dbReference type="Proteomes" id="UP000059680">
    <property type="component" value="Chromosome 3"/>
</dbReference>
<dbReference type="ExpressionAtlas" id="Q10KT6">
    <property type="expression patterns" value="baseline and differential"/>
</dbReference>
<dbReference type="GO" id="GO:0005886">
    <property type="term" value="C:plasma membrane"/>
    <property type="evidence" value="ECO:0000318"/>
    <property type="project" value="GO_Central"/>
</dbReference>
<dbReference type="GO" id="GO:0005375">
    <property type="term" value="F:copper ion transmembrane transporter activity"/>
    <property type="evidence" value="ECO:0000318"/>
    <property type="project" value="GO_Central"/>
</dbReference>
<dbReference type="InterPro" id="IPR007274">
    <property type="entry name" value="Cop_transporter"/>
</dbReference>
<dbReference type="PANTHER" id="PTHR12483:SF42">
    <property type="entry name" value="COPPER TRANSPORTER 4"/>
    <property type="match status" value="1"/>
</dbReference>
<dbReference type="PANTHER" id="PTHR12483">
    <property type="entry name" value="SOLUTE CARRIER FAMILY 31 COPPER TRANSPORTERS"/>
    <property type="match status" value="1"/>
</dbReference>
<dbReference type="Pfam" id="PF04145">
    <property type="entry name" value="Ctr"/>
    <property type="match status" value="1"/>
</dbReference>
<gene>
    <name type="primary">COPT4</name>
    <name type="ordered locus">Os03g0370800</name>
    <name type="ordered locus">LOC_Os03g25470</name>
</gene>
<feature type="chain" id="PRO_0000400001" description="Copper transporter 4">
    <location>
        <begin position="1"/>
        <end position="183"/>
    </location>
</feature>
<feature type="transmembrane region" description="Helical" evidence="2">
    <location>
        <begin position="56"/>
        <end position="76"/>
    </location>
</feature>
<feature type="transmembrane region" description="Helical" evidence="2">
    <location>
        <begin position="115"/>
        <end position="135"/>
    </location>
</feature>
<feature type="region of interest" description="Disordered" evidence="3">
    <location>
        <begin position="1"/>
        <end position="21"/>
    </location>
</feature>
<feature type="sequence conflict" description="In Ref. 5; EAZ27073." evidence="4" ref="5">
    <original>A</original>
    <variation>D</variation>
    <location>
        <position position="167"/>
    </location>
</feature>
<accession>Q10KT6</accession>
<accession>A3AID4</accession>
<evidence type="ECO:0000250" key="1"/>
<evidence type="ECO:0000255" key="2"/>
<evidence type="ECO:0000256" key="3">
    <source>
        <dbReference type="SAM" id="MobiDB-lite"/>
    </source>
</evidence>
<evidence type="ECO:0000305" key="4"/>
<comment type="function">
    <text evidence="1">Involved in the transport of copper.</text>
</comment>
<comment type="subcellular location">
    <subcellularLocation>
        <location evidence="4">Membrane</location>
        <topology evidence="4">Multi-pass membrane protein</topology>
    </subcellularLocation>
</comment>
<comment type="similarity">
    <text evidence="4">Belongs to the copper transporter (Ctr) (TC 1.A.56) family. SLC31A subfamily.</text>
</comment>